<name>HIS4_SALPB</name>
<feature type="chain" id="PRO_1000084110" description="1-(5-phosphoribosyl)-5-[(5-phosphoribosylamino)methylideneamino] imidazole-4-carboxamide isomerase">
    <location>
        <begin position="1"/>
        <end position="245"/>
    </location>
</feature>
<feature type="active site" description="Proton acceptor" evidence="1">
    <location>
        <position position="7"/>
    </location>
</feature>
<feature type="active site" description="Proton donor" evidence="1">
    <location>
        <position position="129"/>
    </location>
</feature>
<protein>
    <recommendedName>
        <fullName evidence="1">1-(5-phosphoribosyl)-5-[(5-phosphoribosylamino)methylideneamino] imidazole-4-carboxamide isomerase</fullName>
        <ecNumber evidence="1">5.3.1.16</ecNumber>
    </recommendedName>
    <alternativeName>
        <fullName evidence="1">Phosphoribosylformimino-5-aminoimidazole carboxamide ribotide isomerase</fullName>
    </alternativeName>
</protein>
<organism>
    <name type="scientific">Salmonella paratyphi B (strain ATCC BAA-1250 / SPB7)</name>
    <dbReference type="NCBI Taxonomy" id="1016998"/>
    <lineage>
        <taxon>Bacteria</taxon>
        <taxon>Pseudomonadati</taxon>
        <taxon>Pseudomonadota</taxon>
        <taxon>Gammaproteobacteria</taxon>
        <taxon>Enterobacterales</taxon>
        <taxon>Enterobacteriaceae</taxon>
        <taxon>Salmonella</taxon>
    </lineage>
</organism>
<evidence type="ECO:0000255" key="1">
    <source>
        <dbReference type="HAMAP-Rule" id="MF_01014"/>
    </source>
</evidence>
<dbReference type="EC" id="5.3.1.16" evidence="1"/>
<dbReference type="EMBL" id="CP000886">
    <property type="protein sequence ID" value="ABX66379.1"/>
    <property type="molecule type" value="Genomic_DNA"/>
</dbReference>
<dbReference type="RefSeq" id="WP_000586409.1">
    <property type="nucleotide sequence ID" value="NC_010102.1"/>
</dbReference>
<dbReference type="SMR" id="A9N7S1"/>
<dbReference type="KEGG" id="spq:SPAB_00957"/>
<dbReference type="PATRIC" id="fig|1016998.12.peg.900"/>
<dbReference type="HOGENOM" id="CLU_048577_1_2_6"/>
<dbReference type="BioCyc" id="SENT1016998:SPAB_RS03965-MONOMER"/>
<dbReference type="UniPathway" id="UPA00031">
    <property type="reaction ID" value="UER00009"/>
</dbReference>
<dbReference type="Proteomes" id="UP000008556">
    <property type="component" value="Chromosome"/>
</dbReference>
<dbReference type="GO" id="GO:0005737">
    <property type="term" value="C:cytoplasm"/>
    <property type="evidence" value="ECO:0007669"/>
    <property type="project" value="UniProtKB-SubCell"/>
</dbReference>
<dbReference type="GO" id="GO:0003949">
    <property type="term" value="F:1-(5-phosphoribosyl)-5-[(5-phosphoribosylamino)methylideneamino]imidazole-4-carboxamide isomerase activity"/>
    <property type="evidence" value="ECO:0007669"/>
    <property type="project" value="UniProtKB-UniRule"/>
</dbReference>
<dbReference type="GO" id="GO:0000105">
    <property type="term" value="P:L-histidine biosynthetic process"/>
    <property type="evidence" value="ECO:0007669"/>
    <property type="project" value="UniProtKB-UniRule"/>
</dbReference>
<dbReference type="GO" id="GO:0000162">
    <property type="term" value="P:L-tryptophan biosynthetic process"/>
    <property type="evidence" value="ECO:0007669"/>
    <property type="project" value="TreeGrafter"/>
</dbReference>
<dbReference type="CDD" id="cd04732">
    <property type="entry name" value="HisA"/>
    <property type="match status" value="1"/>
</dbReference>
<dbReference type="FunFam" id="3.20.20.70:FF:000009">
    <property type="entry name" value="1-(5-phosphoribosyl)-5-[(5-phosphoribosylamino)methylideneamino] imidazole-4-carboxamide isomerase"/>
    <property type="match status" value="1"/>
</dbReference>
<dbReference type="Gene3D" id="3.20.20.70">
    <property type="entry name" value="Aldolase class I"/>
    <property type="match status" value="1"/>
</dbReference>
<dbReference type="HAMAP" id="MF_01014">
    <property type="entry name" value="HisA"/>
    <property type="match status" value="1"/>
</dbReference>
<dbReference type="InterPro" id="IPR013785">
    <property type="entry name" value="Aldolase_TIM"/>
</dbReference>
<dbReference type="InterPro" id="IPR006062">
    <property type="entry name" value="His_biosynth"/>
</dbReference>
<dbReference type="InterPro" id="IPR006063">
    <property type="entry name" value="HisA_bact_arch"/>
</dbReference>
<dbReference type="InterPro" id="IPR044524">
    <property type="entry name" value="Isoase_HisA-like"/>
</dbReference>
<dbReference type="InterPro" id="IPR023016">
    <property type="entry name" value="Isoase_HisA-like_bact"/>
</dbReference>
<dbReference type="InterPro" id="IPR011060">
    <property type="entry name" value="RibuloseP-bd_barrel"/>
</dbReference>
<dbReference type="NCBIfam" id="TIGR00007">
    <property type="entry name" value="1-(5-phosphoribosyl)-5-[(5-phosphoribosylamino)methylideneamino]imidazole-4-carboxamide isomerase"/>
    <property type="match status" value="1"/>
</dbReference>
<dbReference type="PANTHER" id="PTHR43090">
    <property type="entry name" value="1-(5-PHOSPHORIBOSYL)-5-[(5-PHOSPHORIBOSYLAMINO)METHYLIDENEAMINO] IMIDAZOLE-4-CARBOXAMIDE ISOMERASE"/>
    <property type="match status" value="1"/>
</dbReference>
<dbReference type="PANTHER" id="PTHR43090:SF2">
    <property type="entry name" value="1-(5-PHOSPHORIBOSYL)-5-[(5-PHOSPHORIBOSYLAMINO)METHYLIDENEAMINO] IMIDAZOLE-4-CARBOXAMIDE ISOMERASE"/>
    <property type="match status" value="1"/>
</dbReference>
<dbReference type="Pfam" id="PF00977">
    <property type="entry name" value="His_biosynth"/>
    <property type="match status" value="1"/>
</dbReference>
<dbReference type="SUPFAM" id="SSF51366">
    <property type="entry name" value="Ribulose-phoshate binding barrel"/>
    <property type="match status" value="1"/>
</dbReference>
<reference key="1">
    <citation type="submission" date="2007-11" db="EMBL/GenBank/DDBJ databases">
        <authorList>
            <consortium name="The Salmonella enterica serovar Paratyphi B Genome Sequencing Project"/>
            <person name="McClelland M."/>
            <person name="Sanderson E.K."/>
            <person name="Porwollik S."/>
            <person name="Spieth J."/>
            <person name="Clifton W.S."/>
            <person name="Fulton R."/>
            <person name="Cordes M."/>
            <person name="Wollam A."/>
            <person name="Shah N."/>
            <person name="Pepin K."/>
            <person name="Bhonagiri V."/>
            <person name="Nash W."/>
            <person name="Johnson M."/>
            <person name="Thiruvilangam P."/>
            <person name="Wilson R."/>
        </authorList>
    </citation>
    <scope>NUCLEOTIDE SEQUENCE [LARGE SCALE GENOMIC DNA]</scope>
    <source>
        <strain>ATCC BAA-1250 / SPB7</strain>
    </source>
</reference>
<keyword id="KW-0028">Amino-acid biosynthesis</keyword>
<keyword id="KW-0963">Cytoplasm</keyword>
<keyword id="KW-0368">Histidine biosynthesis</keyword>
<keyword id="KW-0413">Isomerase</keyword>
<sequence length="245" mass="26089">MIIPALDLIDGTVVRLHQGDYARQRDYGNDPLPRLQDYAAQGAGVLHLVDLTGAKDPAKRQIPLIKTLVAGVNVPVQVGGGVRTEEDVAALLKAGVARVVIGSTAVKSPDVVKGWFERFGAQALVLALDVRIDEHGTKQVAVSGWQENSGVSLEQLVETYLPVGLKHVLCTDISRDGTLAGSNVSLYEEVCARYPQIAFQSSGGIGDIDDIAALRGTGVRGVIVGRALLEGKFTVKEAIQCWQNV</sequence>
<gene>
    <name evidence="1" type="primary">hisA</name>
    <name type="ordered locus">SPAB_00957</name>
</gene>
<comment type="catalytic activity">
    <reaction evidence="1">
        <text>1-(5-phospho-beta-D-ribosyl)-5-[(5-phospho-beta-D-ribosylamino)methylideneamino]imidazole-4-carboxamide = 5-[(5-phospho-1-deoxy-D-ribulos-1-ylimino)methylamino]-1-(5-phospho-beta-D-ribosyl)imidazole-4-carboxamide</text>
        <dbReference type="Rhea" id="RHEA:15469"/>
        <dbReference type="ChEBI" id="CHEBI:58435"/>
        <dbReference type="ChEBI" id="CHEBI:58525"/>
        <dbReference type="EC" id="5.3.1.16"/>
    </reaction>
</comment>
<comment type="pathway">
    <text evidence="1">Amino-acid biosynthesis; L-histidine biosynthesis; L-histidine from 5-phospho-alpha-D-ribose 1-diphosphate: step 4/9.</text>
</comment>
<comment type="subcellular location">
    <subcellularLocation>
        <location evidence="1">Cytoplasm</location>
    </subcellularLocation>
</comment>
<comment type="similarity">
    <text evidence="1">Belongs to the HisA/HisF family.</text>
</comment>
<accession>A9N7S1</accession>
<proteinExistence type="inferred from homology"/>